<accession>Q6PDK8</accession>
<accession>Q6IS30</accession>
<accession>Q8BID3</accession>
<dbReference type="EC" id="2.3.2.27" evidence="2"/>
<dbReference type="EMBL" id="BC058647">
    <property type="protein sequence ID" value="AAH58647.1"/>
    <property type="molecule type" value="mRNA"/>
</dbReference>
<dbReference type="EMBL" id="BC069975">
    <property type="protein sequence ID" value="AAH69975.1"/>
    <property type="molecule type" value="mRNA"/>
</dbReference>
<dbReference type="EMBL" id="AK086624">
    <property type="protein sequence ID" value="BAC39704.1"/>
    <property type="status" value="ALT_FRAME"/>
    <property type="molecule type" value="mRNA"/>
</dbReference>
<dbReference type="CCDS" id="CCDS29631.1"/>
<dbReference type="RefSeq" id="NP_766030.3">
    <property type="nucleotide sequence ID" value="NM_172442.3"/>
</dbReference>
<dbReference type="SMR" id="Q6PDK8"/>
<dbReference type="BioGRID" id="228902">
    <property type="interactions" value="2"/>
</dbReference>
<dbReference type="FunCoup" id="Q6PDK8">
    <property type="interactions" value="958"/>
</dbReference>
<dbReference type="STRING" id="10090.ENSMUSP00000040229"/>
<dbReference type="iPTMnet" id="Q6PDK8"/>
<dbReference type="PhosphoSitePlus" id="Q6PDK8"/>
<dbReference type="PaxDb" id="10090-ENSMUSP00000040229"/>
<dbReference type="ProteomicsDB" id="277527"/>
<dbReference type="Antibodypedia" id="52744">
    <property type="antibodies" value="123 antibodies from 22 providers"/>
</dbReference>
<dbReference type="DNASU" id="207521"/>
<dbReference type="Ensembl" id="ENSMUST00000045521.9">
    <property type="protein sequence ID" value="ENSMUSP00000040229.8"/>
    <property type="gene ID" value="ENSMUSG00000039982.9"/>
</dbReference>
<dbReference type="GeneID" id="207521"/>
<dbReference type="KEGG" id="mmu:207521"/>
<dbReference type="UCSC" id="uc008guc.2">
    <property type="organism name" value="mouse"/>
</dbReference>
<dbReference type="AGR" id="MGI:2672905"/>
<dbReference type="CTD" id="23220"/>
<dbReference type="MGI" id="MGI:2672905">
    <property type="gene designation" value="Dtx4"/>
</dbReference>
<dbReference type="VEuPathDB" id="HostDB:ENSMUSG00000039982"/>
<dbReference type="eggNOG" id="ENOG502QQ9M">
    <property type="taxonomic scope" value="Eukaryota"/>
</dbReference>
<dbReference type="GeneTree" id="ENSGT00940000157122"/>
<dbReference type="HOGENOM" id="CLU_030422_4_0_1"/>
<dbReference type="InParanoid" id="Q6PDK8"/>
<dbReference type="OMA" id="AIGFCYV"/>
<dbReference type="OrthoDB" id="2449614at2759"/>
<dbReference type="PhylomeDB" id="Q6PDK8"/>
<dbReference type="TreeFam" id="TF325526"/>
<dbReference type="Reactome" id="R-MMU-2122948">
    <property type="pathway name" value="Activated NOTCH1 Transmits Signal to the Nucleus"/>
</dbReference>
<dbReference type="Reactome" id="R-MMU-3134975">
    <property type="pathway name" value="Regulation of innate immune responses to cytosolic DNA"/>
</dbReference>
<dbReference type="Reactome" id="R-MMU-3270619">
    <property type="pathway name" value="IRF3-mediated induction of type I IFN"/>
</dbReference>
<dbReference type="UniPathway" id="UPA00143"/>
<dbReference type="BioGRID-ORCS" id="207521">
    <property type="hits" value="1 hit in 77 CRISPR screens"/>
</dbReference>
<dbReference type="PRO" id="PR:Q6PDK8"/>
<dbReference type="Proteomes" id="UP000000589">
    <property type="component" value="Chromosome 19"/>
</dbReference>
<dbReference type="RNAct" id="Q6PDK8">
    <property type="molecule type" value="protein"/>
</dbReference>
<dbReference type="Bgee" id="ENSMUSG00000039982">
    <property type="expression patterns" value="Expressed in floor plate of midbrain and 220 other cell types or tissues"/>
</dbReference>
<dbReference type="GO" id="GO:0005813">
    <property type="term" value="C:centrosome"/>
    <property type="evidence" value="ECO:0007669"/>
    <property type="project" value="Ensembl"/>
</dbReference>
<dbReference type="GO" id="GO:0005737">
    <property type="term" value="C:cytoplasm"/>
    <property type="evidence" value="ECO:0007669"/>
    <property type="project" value="UniProtKB-SubCell"/>
</dbReference>
<dbReference type="GO" id="GO:0061630">
    <property type="term" value="F:ubiquitin protein ligase activity"/>
    <property type="evidence" value="ECO:0007669"/>
    <property type="project" value="Ensembl"/>
</dbReference>
<dbReference type="GO" id="GO:0008270">
    <property type="term" value="F:zinc ion binding"/>
    <property type="evidence" value="ECO:0007669"/>
    <property type="project" value="UniProtKB-KW"/>
</dbReference>
<dbReference type="GO" id="GO:0045824">
    <property type="term" value="P:negative regulation of innate immune response"/>
    <property type="evidence" value="ECO:0007669"/>
    <property type="project" value="Ensembl"/>
</dbReference>
<dbReference type="GO" id="GO:0007219">
    <property type="term" value="P:Notch signaling pathway"/>
    <property type="evidence" value="ECO:0007669"/>
    <property type="project" value="UniProtKB-KW"/>
</dbReference>
<dbReference type="GO" id="GO:0043161">
    <property type="term" value="P:proteasome-mediated ubiquitin-dependent protein catabolic process"/>
    <property type="evidence" value="ECO:0007669"/>
    <property type="project" value="Ensembl"/>
</dbReference>
<dbReference type="GO" id="GO:0070936">
    <property type="term" value="P:protein K48-linked ubiquitination"/>
    <property type="evidence" value="ECO:0007669"/>
    <property type="project" value="Ensembl"/>
</dbReference>
<dbReference type="CDD" id="cd09633">
    <property type="entry name" value="Deltex_C"/>
    <property type="match status" value="1"/>
</dbReference>
<dbReference type="CDD" id="cd16671">
    <property type="entry name" value="RING-H2_DTX1_4"/>
    <property type="match status" value="1"/>
</dbReference>
<dbReference type="FunFam" id="3.30.40.10:FF:000097">
    <property type="entry name" value="E3 ubiquitin-protein ligase DTX4"/>
    <property type="match status" value="1"/>
</dbReference>
<dbReference type="FunFam" id="3.30.720.50:FF:000004">
    <property type="entry name" value="Probable E3 ubiquitin-protein ligase DTX2"/>
    <property type="match status" value="1"/>
</dbReference>
<dbReference type="FunFam" id="3.30.720.50:FF:000005">
    <property type="entry name" value="Probable E3 ubiquitin-protein ligase DTX2"/>
    <property type="match status" value="1"/>
</dbReference>
<dbReference type="FunFam" id="3.30.390.130:FF:000001">
    <property type="entry name" value="Probable E3 ubiquitin-protein ligase DTX3"/>
    <property type="match status" value="1"/>
</dbReference>
<dbReference type="Gene3D" id="3.30.390.130">
    <property type="match status" value="1"/>
</dbReference>
<dbReference type="Gene3D" id="3.30.720.50">
    <property type="match status" value="2"/>
</dbReference>
<dbReference type="Gene3D" id="3.30.40.10">
    <property type="entry name" value="Zinc/RING finger domain, C3HC4 (zinc finger)"/>
    <property type="match status" value="1"/>
</dbReference>
<dbReference type="InterPro" id="IPR039396">
    <property type="entry name" value="Deltex_C"/>
</dbReference>
<dbReference type="InterPro" id="IPR039399">
    <property type="entry name" value="Deltex_C_sf"/>
</dbReference>
<dbReference type="InterPro" id="IPR039398">
    <property type="entry name" value="Deltex_fam"/>
</dbReference>
<dbReference type="InterPro" id="IPR018123">
    <property type="entry name" value="WWE-dom_subgr"/>
</dbReference>
<dbReference type="InterPro" id="IPR004170">
    <property type="entry name" value="WWE_dom"/>
</dbReference>
<dbReference type="InterPro" id="IPR037197">
    <property type="entry name" value="WWE_dom_sf"/>
</dbReference>
<dbReference type="InterPro" id="IPR018957">
    <property type="entry name" value="Znf_C3HC4_RING-type"/>
</dbReference>
<dbReference type="InterPro" id="IPR001841">
    <property type="entry name" value="Znf_RING"/>
</dbReference>
<dbReference type="InterPro" id="IPR013083">
    <property type="entry name" value="Znf_RING/FYVE/PHD"/>
</dbReference>
<dbReference type="PANTHER" id="PTHR12622">
    <property type="entry name" value="DELTEX-RELATED"/>
    <property type="match status" value="1"/>
</dbReference>
<dbReference type="Pfam" id="PF18102">
    <property type="entry name" value="DTC"/>
    <property type="match status" value="1"/>
</dbReference>
<dbReference type="Pfam" id="PF02825">
    <property type="entry name" value="WWE"/>
    <property type="match status" value="2"/>
</dbReference>
<dbReference type="Pfam" id="PF00097">
    <property type="entry name" value="zf-C3HC4"/>
    <property type="match status" value="1"/>
</dbReference>
<dbReference type="SMART" id="SM00184">
    <property type="entry name" value="RING"/>
    <property type="match status" value="1"/>
</dbReference>
<dbReference type="SMART" id="SM00678">
    <property type="entry name" value="WWE"/>
    <property type="match status" value="2"/>
</dbReference>
<dbReference type="SUPFAM" id="SSF57850">
    <property type="entry name" value="RING/U-box"/>
    <property type="match status" value="1"/>
</dbReference>
<dbReference type="SUPFAM" id="SSF117839">
    <property type="entry name" value="WWE domain"/>
    <property type="match status" value="2"/>
</dbReference>
<dbReference type="PROSITE" id="PS50918">
    <property type="entry name" value="WWE"/>
    <property type="match status" value="2"/>
</dbReference>
<dbReference type="PROSITE" id="PS50089">
    <property type="entry name" value="ZF_RING_2"/>
    <property type="match status" value="1"/>
</dbReference>
<gene>
    <name type="primary">Dtx4</name>
</gene>
<protein>
    <recommendedName>
        <fullName>E3 ubiquitin-protein ligase DTX4</fullName>
        <ecNumber evidence="2">2.3.2.27</ecNumber>
    </recommendedName>
    <alternativeName>
        <fullName>Protein deltex-4</fullName>
        <shortName>Deltex4</shortName>
    </alternativeName>
    <alternativeName>
        <fullName evidence="9">RING-type E3 ubiquitin transferase DTX4</fullName>
    </alternativeName>
</protein>
<organism>
    <name type="scientific">Mus musculus</name>
    <name type="common">Mouse</name>
    <dbReference type="NCBI Taxonomy" id="10090"/>
    <lineage>
        <taxon>Eukaryota</taxon>
        <taxon>Metazoa</taxon>
        <taxon>Chordata</taxon>
        <taxon>Craniata</taxon>
        <taxon>Vertebrata</taxon>
        <taxon>Euteleostomi</taxon>
        <taxon>Mammalia</taxon>
        <taxon>Eutheria</taxon>
        <taxon>Euarchontoglires</taxon>
        <taxon>Glires</taxon>
        <taxon>Rodentia</taxon>
        <taxon>Myomorpha</taxon>
        <taxon>Muroidea</taxon>
        <taxon>Muridae</taxon>
        <taxon>Murinae</taxon>
        <taxon>Mus</taxon>
        <taxon>Mus</taxon>
    </lineage>
</organism>
<feature type="chain" id="PRO_0000280556" description="E3 ubiquitin-protein ligase DTX4">
    <location>
        <begin position="1"/>
        <end position="616"/>
    </location>
</feature>
<feature type="domain" description="WWE 1" evidence="5">
    <location>
        <begin position="1"/>
        <end position="78"/>
    </location>
</feature>
<feature type="domain" description="WWE 2" evidence="5">
    <location>
        <begin position="79"/>
        <end position="155"/>
    </location>
</feature>
<feature type="zinc finger region" description="RING-type; atypical" evidence="4">
    <location>
        <begin position="406"/>
        <end position="465"/>
    </location>
</feature>
<feature type="region of interest" description="Disordered" evidence="6">
    <location>
        <begin position="223"/>
        <end position="254"/>
    </location>
</feature>
<feature type="region of interest" description="Disordered" evidence="6">
    <location>
        <begin position="355"/>
        <end position="387"/>
    </location>
</feature>
<feature type="compositionally biased region" description="Basic residues" evidence="6">
    <location>
        <begin position="375"/>
        <end position="384"/>
    </location>
</feature>
<feature type="sequence conflict" description="In Ref. 1; AAH58647." evidence="9" ref="1">
    <original>A</original>
    <variation>T</variation>
    <location>
        <position position="272"/>
    </location>
</feature>
<name>DTX4_MOUSE</name>
<comment type="function">
    <text evidence="1 8">Functions as a ubiquitin ligase protein in vivo, mediating 'Lys48'-linked polyubiquitination and promoting degradation of TBK1, targeting to TBK1 requires interaction with NLRP4 (By similarity). Regulator of Notch signaling, a signaling pathway involved in cell-cell communications that regulates a broad spectrum of cell-fate determinations.</text>
</comment>
<comment type="catalytic activity">
    <reaction evidence="2">
        <text>S-ubiquitinyl-[E2 ubiquitin-conjugating enzyme]-L-cysteine + [acceptor protein]-L-lysine = [E2 ubiquitin-conjugating enzyme]-L-cysteine + N(6)-ubiquitinyl-[acceptor protein]-L-lysine.</text>
        <dbReference type="EC" id="2.3.2.27"/>
    </reaction>
</comment>
<comment type="pathway">
    <text>Protein modification; protein ubiquitination.</text>
</comment>
<comment type="subunit">
    <text evidence="3">Interacts with NLRP4.</text>
</comment>
<comment type="subcellular location">
    <subcellularLocation>
        <location evidence="1">Cytoplasm</location>
    </subcellularLocation>
</comment>
<comment type="tissue specificity">
    <text evidence="7 8">Expressed in brain, testis, embryonic fibroblasts and thymocytes.</text>
</comment>
<comment type="domain">
    <text evidence="1">The WWE domains are thought to mediate some protein-protein interaction, and are frequently found in ubiquitin ligases.</text>
</comment>
<comment type="similarity">
    <text evidence="9">Belongs to the Deltex family.</text>
</comment>
<comment type="sequence caution" evidence="9">
    <conflict type="frameshift">
        <sequence resource="EMBL-CDS" id="BAC39704"/>
    </conflict>
</comment>
<proteinExistence type="evidence at protein level"/>
<keyword id="KW-0963">Cytoplasm</keyword>
<keyword id="KW-0903">Direct protein sequencing</keyword>
<keyword id="KW-0479">Metal-binding</keyword>
<keyword id="KW-0914">Notch signaling pathway</keyword>
<keyword id="KW-1185">Reference proteome</keyword>
<keyword id="KW-0677">Repeat</keyword>
<keyword id="KW-0808">Transferase</keyword>
<keyword id="KW-0833">Ubl conjugation pathway</keyword>
<keyword id="KW-0862">Zinc</keyword>
<keyword id="KW-0863">Zinc-finger</keyword>
<sequence length="616" mass="66821">MLLASAVVVWEWLNEHGRWRPYSPAVSHHIEAVVRAGPRAGGSVVLGQVDSRLAPYIIDLQSMNQFRQDTGTLRPVRRNYYDPSSAPGKGVVWEWENDNGSWTPYDMEVGITIQYAYEKQHPWIDLTSIGFSYIIDFSTMGQINRQTQRQRRVRRRLDLIYPMVTGTMPKTQSWPVSPGPATSSPAPPCSCPQCVLVMSVKAAVVHGGTGPPAVRKNMALSGVGKLPQPPGPGAKPLDTTGTIRGPGKTAPSQVIRRQVSNAPAGATVGSPASPQGSNRKTGRVALATLNRSNLQRLAIAQSRVLIASGVPTVPVKNLNGSSPVNPALAGITGILMSAAGLPVCLTRPPKLVLHPPPVSKSEIKSIPGVSNTSRKTTKKQAKKGKTPEEVLKKYLQKVRHPPEEDCTICMERLTAPSGYKGPQPTVKPDLVGKLSRCGHIYHIYCLVAMYNNGNKDGSLQCPTCKTIYGVKTGTQPPGKMEYHLIPHSLPGHPDCKTIRIIYSIPPGIQGPEHPNPGKSFSARGFPRHCYLPDSEKGRKVLKLLLVAWDRRLIFAIGTSSTTGESDTVIWNEVHHKTEFGSNLTGHGYPDANYLDNVLAELAAQGISEDSTSHEKD</sequence>
<reference key="1">
    <citation type="journal article" date="2004" name="Genome Res.">
        <title>The status, quality, and expansion of the NIH full-length cDNA project: the Mammalian Gene Collection (MGC).</title>
        <authorList>
            <consortium name="The MGC Project Team"/>
        </authorList>
    </citation>
    <scope>NUCLEOTIDE SEQUENCE [LARGE SCALE MRNA]</scope>
    <source>
        <strain>C57BL/6J</strain>
        <tissue>Brain</tissue>
        <tissue>Embryo</tissue>
    </source>
</reference>
<reference key="2">
    <citation type="journal article" date="2005" name="Science">
        <title>The transcriptional landscape of the mammalian genome.</title>
        <authorList>
            <person name="Carninci P."/>
            <person name="Kasukawa T."/>
            <person name="Katayama S."/>
            <person name="Gough J."/>
            <person name="Frith M.C."/>
            <person name="Maeda N."/>
            <person name="Oyama R."/>
            <person name="Ravasi T."/>
            <person name="Lenhard B."/>
            <person name="Wells C."/>
            <person name="Kodzius R."/>
            <person name="Shimokawa K."/>
            <person name="Bajic V.B."/>
            <person name="Brenner S.E."/>
            <person name="Batalov S."/>
            <person name="Forrest A.R."/>
            <person name="Zavolan M."/>
            <person name="Davis M.J."/>
            <person name="Wilming L.G."/>
            <person name="Aidinis V."/>
            <person name="Allen J.E."/>
            <person name="Ambesi-Impiombato A."/>
            <person name="Apweiler R."/>
            <person name="Aturaliya R.N."/>
            <person name="Bailey T.L."/>
            <person name="Bansal M."/>
            <person name="Baxter L."/>
            <person name="Beisel K.W."/>
            <person name="Bersano T."/>
            <person name="Bono H."/>
            <person name="Chalk A.M."/>
            <person name="Chiu K.P."/>
            <person name="Choudhary V."/>
            <person name="Christoffels A."/>
            <person name="Clutterbuck D.R."/>
            <person name="Crowe M.L."/>
            <person name="Dalla E."/>
            <person name="Dalrymple B.P."/>
            <person name="de Bono B."/>
            <person name="Della Gatta G."/>
            <person name="di Bernardo D."/>
            <person name="Down T."/>
            <person name="Engstrom P."/>
            <person name="Fagiolini M."/>
            <person name="Faulkner G."/>
            <person name="Fletcher C.F."/>
            <person name="Fukushima T."/>
            <person name="Furuno M."/>
            <person name="Futaki S."/>
            <person name="Gariboldi M."/>
            <person name="Georgii-Hemming P."/>
            <person name="Gingeras T.R."/>
            <person name="Gojobori T."/>
            <person name="Green R.E."/>
            <person name="Gustincich S."/>
            <person name="Harbers M."/>
            <person name="Hayashi Y."/>
            <person name="Hensch T.K."/>
            <person name="Hirokawa N."/>
            <person name="Hill D."/>
            <person name="Huminiecki L."/>
            <person name="Iacono M."/>
            <person name="Ikeo K."/>
            <person name="Iwama A."/>
            <person name="Ishikawa T."/>
            <person name="Jakt M."/>
            <person name="Kanapin A."/>
            <person name="Katoh M."/>
            <person name="Kawasawa Y."/>
            <person name="Kelso J."/>
            <person name="Kitamura H."/>
            <person name="Kitano H."/>
            <person name="Kollias G."/>
            <person name="Krishnan S.P."/>
            <person name="Kruger A."/>
            <person name="Kummerfeld S.K."/>
            <person name="Kurochkin I.V."/>
            <person name="Lareau L.F."/>
            <person name="Lazarevic D."/>
            <person name="Lipovich L."/>
            <person name="Liu J."/>
            <person name="Liuni S."/>
            <person name="McWilliam S."/>
            <person name="Madan Babu M."/>
            <person name="Madera M."/>
            <person name="Marchionni L."/>
            <person name="Matsuda H."/>
            <person name="Matsuzawa S."/>
            <person name="Miki H."/>
            <person name="Mignone F."/>
            <person name="Miyake S."/>
            <person name="Morris K."/>
            <person name="Mottagui-Tabar S."/>
            <person name="Mulder N."/>
            <person name="Nakano N."/>
            <person name="Nakauchi H."/>
            <person name="Ng P."/>
            <person name="Nilsson R."/>
            <person name="Nishiguchi S."/>
            <person name="Nishikawa S."/>
            <person name="Nori F."/>
            <person name="Ohara O."/>
            <person name="Okazaki Y."/>
            <person name="Orlando V."/>
            <person name="Pang K.C."/>
            <person name="Pavan W.J."/>
            <person name="Pavesi G."/>
            <person name="Pesole G."/>
            <person name="Petrovsky N."/>
            <person name="Piazza S."/>
            <person name="Reed J."/>
            <person name="Reid J.F."/>
            <person name="Ring B.Z."/>
            <person name="Ringwald M."/>
            <person name="Rost B."/>
            <person name="Ruan Y."/>
            <person name="Salzberg S.L."/>
            <person name="Sandelin A."/>
            <person name="Schneider C."/>
            <person name="Schoenbach C."/>
            <person name="Sekiguchi K."/>
            <person name="Semple C.A."/>
            <person name="Seno S."/>
            <person name="Sessa L."/>
            <person name="Sheng Y."/>
            <person name="Shibata Y."/>
            <person name="Shimada H."/>
            <person name="Shimada K."/>
            <person name="Silva D."/>
            <person name="Sinclair B."/>
            <person name="Sperling S."/>
            <person name="Stupka E."/>
            <person name="Sugiura K."/>
            <person name="Sultana R."/>
            <person name="Takenaka Y."/>
            <person name="Taki K."/>
            <person name="Tammoja K."/>
            <person name="Tan S.L."/>
            <person name="Tang S."/>
            <person name="Taylor M.S."/>
            <person name="Tegner J."/>
            <person name="Teichmann S.A."/>
            <person name="Ueda H.R."/>
            <person name="van Nimwegen E."/>
            <person name="Verardo R."/>
            <person name="Wei C.L."/>
            <person name="Yagi K."/>
            <person name="Yamanishi H."/>
            <person name="Zabarovsky E."/>
            <person name="Zhu S."/>
            <person name="Zimmer A."/>
            <person name="Hide W."/>
            <person name="Bult C."/>
            <person name="Grimmond S.M."/>
            <person name="Teasdale R.D."/>
            <person name="Liu E.T."/>
            <person name="Brusic V."/>
            <person name="Quackenbush J."/>
            <person name="Wahlestedt C."/>
            <person name="Mattick J.S."/>
            <person name="Hume D.A."/>
            <person name="Kai C."/>
            <person name="Sasaki D."/>
            <person name="Tomaru Y."/>
            <person name="Fukuda S."/>
            <person name="Kanamori-Katayama M."/>
            <person name="Suzuki M."/>
            <person name="Aoki J."/>
            <person name="Arakawa T."/>
            <person name="Iida J."/>
            <person name="Imamura K."/>
            <person name="Itoh M."/>
            <person name="Kato T."/>
            <person name="Kawaji H."/>
            <person name="Kawagashira N."/>
            <person name="Kawashima T."/>
            <person name="Kojima M."/>
            <person name="Kondo S."/>
            <person name="Konno H."/>
            <person name="Nakano K."/>
            <person name="Ninomiya N."/>
            <person name="Nishio T."/>
            <person name="Okada M."/>
            <person name="Plessy C."/>
            <person name="Shibata K."/>
            <person name="Shiraki T."/>
            <person name="Suzuki S."/>
            <person name="Tagami M."/>
            <person name="Waki K."/>
            <person name="Watahiki A."/>
            <person name="Okamura-Oho Y."/>
            <person name="Suzuki H."/>
            <person name="Kawai J."/>
            <person name="Hayashizaki Y."/>
        </authorList>
    </citation>
    <scope>NUCLEOTIDE SEQUENCE [LARGE SCALE MRNA] OF 219-616</scope>
    <source>
        <strain>C57BL/6J</strain>
        <tissue>Head</tissue>
    </source>
</reference>
<reference key="3">
    <citation type="submission" date="2009-01" db="UniProtKB">
        <authorList>
            <person name="Lubec G."/>
            <person name="Sunyer B."/>
            <person name="Chen W.-Q."/>
        </authorList>
    </citation>
    <scope>PROTEIN SEQUENCE OF 365-374</scope>
    <scope>IDENTIFICATION BY MASS SPECTROMETRY</scope>
    <source>
        <strain>OF1</strain>
        <tissue>Hippocampus</tissue>
    </source>
</reference>
<reference key="4">
    <citation type="journal article" date="2005" name="Mol. Cell. Biol.">
        <title>Normal immune system development in mice lacking the Deltex-1 RING finger domain.</title>
        <authorList>
            <person name="Storck S."/>
            <person name="Delbos F."/>
            <person name="Stadler N."/>
            <person name="Thirion-Delalande C."/>
            <person name="Bernex F."/>
            <person name="Verthuy C."/>
            <person name="Ferrier P."/>
            <person name="Weill J.-C."/>
            <person name="Reynaud C.-A."/>
        </authorList>
    </citation>
    <scope>IDENTIFICATION</scope>
    <scope>TISSUE SPECIFICITY</scope>
</reference>
<reference key="5">
    <citation type="journal article" date="2006" name="Mol. Cell. Biol.">
        <title>T cells develop normally in the absence of both Deltex1 and Deltex2.</title>
        <authorList>
            <person name="Lehar S.M."/>
            <person name="Bevan M.J."/>
        </authorList>
    </citation>
    <scope>FUNCTION</scope>
    <scope>TISSUE SPECIFICITY</scope>
</reference>
<evidence type="ECO:0000250" key="1"/>
<evidence type="ECO:0000250" key="2">
    <source>
        <dbReference type="UniProtKB" id="Q61010"/>
    </source>
</evidence>
<evidence type="ECO:0000250" key="3">
    <source>
        <dbReference type="UniProtKB" id="Q9Y2E6"/>
    </source>
</evidence>
<evidence type="ECO:0000255" key="4">
    <source>
        <dbReference type="PROSITE-ProRule" id="PRU00175"/>
    </source>
</evidence>
<evidence type="ECO:0000255" key="5">
    <source>
        <dbReference type="PROSITE-ProRule" id="PRU00248"/>
    </source>
</evidence>
<evidence type="ECO:0000256" key="6">
    <source>
        <dbReference type="SAM" id="MobiDB-lite"/>
    </source>
</evidence>
<evidence type="ECO:0000269" key="7">
    <source>
    </source>
</evidence>
<evidence type="ECO:0000269" key="8">
    <source>
    </source>
</evidence>
<evidence type="ECO:0000305" key="9"/>